<accession>B2SDE3</accession>
<organism>
    <name type="scientific">Francisella tularensis subsp. mediasiatica (strain FSC147)</name>
    <dbReference type="NCBI Taxonomy" id="441952"/>
    <lineage>
        <taxon>Bacteria</taxon>
        <taxon>Pseudomonadati</taxon>
        <taxon>Pseudomonadota</taxon>
        <taxon>Gammaproteobacteria</taxon>
        <taxon>Thiotrichales</taxon>
        <taxon>Francisellaceae</taxon>
        <taxon>Francisella</taxon>
    </lineage>
</organism>
<evidence type="ECO:0000255" key="1">
    <source>
        <dbReference type="HAMAP-Rule" id="MF_00203"/>
    </source>
</evidence>
<proteinExistence type="inferred from homology"/>
<sequence>MIVDNSKDFDLKSFLANLTTHSGVYRMLDKHGEIIYVGKAKNLKNRVNSYFSKGAKDSKTLMMVEQIARIEITITPSDYEAYLLENNLIKQHRPKYNILFKDDKSYPYLVISRDKFPRVSFYRGKSAYKKGQCFGPYVSISSVKNTLNTIQKIFPIRQCENSYYKSRVRPCLQYQIKRCLAPCVGLVSQQQYDEQLAILKKFLAGKFSSVLEEISAKMYQASEDMEYEKAQVYRDQLVVLRKLQQQQIVDIQEDKTFDVIGIYMQDSYASIALLQIQNGDVVADRHWSIDAKGQDKTSIMHAFLSHFYLGDEIRNIWPKNIILSKVEFADITDLMNSISQKIGQAINWIIAPAADNLKWLKLAEVNARQKLNIYTSSKSQYQKRLESLKEFLELEKDIKRIECFDISHFQGEATIASCVVYTDDGEDRKSHRRYNIKGIKSGDDYAAIHQAVSRRVSSGLEADNLPDVMIIDGGKGQIHQAEAVFREYGIQDKVQLVSLGKGVERISGKEKIYKGFDDTEYTLDEHNPGFLLLRQVRDSAHDHAIKGQRKKVSANRQSSIIEEIEGVGSKRRKALLRYFGGWQELSRASVDEIAKVKGISKKLAQEIWECFH</sequence>
<reference key="1">
    <citation type="journal article" date="2009" name="PLoS Pathog.">
        <title>Molecular evolutionary consequences of niche restriction in Francisella tularensis, a facultative intracellular pathogen.</title>
        <authorList>
            <person name="Larsson P."/>
            <person name="Elfsmark D."/>
            <person name="Svensson K."/>
            <person name="Wikstroem P."/>
            <person name="Forsman M."/>
            <person name="Brettin T."/>
            <person name="Keim P."/>
            <person name="Johansson A."/>
        </authorList>
    </citation>
    <scope>NUCLEOTIDE SEQUENCE [LARGE SCALE GENOMIC DNA]</scope>
    <source>
        <strain>FSC147</strain>
    </source>
</reference>
<comment type="function">
    <text evidence="1">The UvrABC repair system catalyzes the recognition and processing of DNA lesions. UvrC both incises the 5' and 3' sides of the lesion. The N-terminal half is responsible for the 3' incision and the C-terminal half is responsible for the 5' incision.</text>
</comment>
<comment type="subunit">
    <text evidence="1">Interacts with UvrB in an incision complex.</text>
</comment>
<comment type="subcellular location">
    <subcellularLocation>
        <location evidence="1">Cytoplasm</location>
    </subcellularLocation>
</comment>
<comment type="similarity">
    <text evidence="1">Belongs to the UvrC family.</text>
</comment>
<gene>
    <name evidence="1" type="primary">uvrC</name>
    <name type="ordered locus">FTM_1311</name>
</gene>
<protein>
    <recommendedName>
        <fullName evidence="1">UvrABC system protein C</fullName>
        <shortName evidence="1">Protein UvrC</shortName>
    </recommendedName>
    <alternativeName>
        <fullName evidence="1">Excinuclease ABC subunit C</fullName>
    </alternativeName>
</protein>
<name>UVRC_FRATM</name>
<keyword id="KW-0963">Cytoplasm</keyword>
<keyword id="KW-0227">DNA damage</keyword>
<keyword id="KW-0228">DNA excision</keyword>
<keyword id="KW-0234">DNA repair</keyword>
<keyword id="KW-0267">Excision nuclease</keyword>
<keyword id="KW-0742">SOS response</keyword>
<dbReference type="EMBL" id="CP000915">
    <property type="protein sequence ID" value="ACD31157.1"/>
    <property type="molecule type" value="Genomic_DNA"/>
</dbReference>
<dbReference type="SMR" id="B2SDE3"/>
<dbReference type="KEGG" id="ftm:FTM_1311"/>
<dbReference type="HOGENOM" id="CLU_014841_3_0_6"/>
<dbReference type="GO" id="GO:0005737">
    <property type="term" value="C:cytoplasm"/>
    <property type="evidence" value="ECO:0007669"/>
    <property type="project" value="UniProtKB-SubCell"/>
</dbReference>
<dbReference type="GO" id="GO:0009380">
    <property type="term" value="C:excinuclease repair complex"/>
    <property type="evidence" value="ECO:0007669"/>
    <property type="project" value="InterPro"/>
</dbReference>
<dbReference type="GO" id="GO:0003677">
    <property type="term" value="F:DNA binding"/>
    <property type="evidence" value="ECO:0007669"/>
    <property type="project" value="UniProtKB-UniRule"/>
</dbReference>
<dbReference type="GO" id="GO:0009381">
    <property type="term" value="F:excinuclease ABC activity"/>
    <property type="evidence" value="ECO:0007669"/>
    <property type="project" value="UniProtKB-UniRule"/>
</dbReference>
<dbReference type="GO" id="GO:0006289">
    <property type="term" value="P:nucleotide-excision repair"/>
    <property type="evidence" value="ECO:0007669"/>
    <property type="project" value="UniProtKB-UniRule"/>
</dbReference>
<dbReference type="GO" id="GO:0009432">
    <property type="term" value="P:SOS response"/>
    <property type="evidence" value="ECO:0007669"/>
    <property type="project" value="UniProtKB-UniRule"/>
</dbReference>
<dbReference type="CDD" id="cd10434">
    <property type="entry name" value="GIY-YIG_UvrC_Cho"/>
    <property type="match status" value="1"/>
</dbReference>
<dbReference type="FunFam" id="3.30.420.340:FF:000001">
    <property type="entry name" value="UvrABC system protein C"/>
    <property type="match status" value="1"/>
</dbReference>
<dbReference type="FunFam" id="3.40.1440.10:FF:000001">
    <property type="entry name" value="UvrABC system protein C"/>
    <property type="match status" value="1"/>
</dbReference>
<dbReference type="Gene3D" id="1.10.150.20">
    <property type="entry name" value="5' to 3' exonuclease, C-terminal subdomain"/>
    <property type="match status" value="1"/>
</dbReference>
<dbReference type="Gene3D" id="3.40.1440.10">
    <property type="entry name" value="GIY-YIG endonuclease"/>
    <property type="match status" value="1"/>
</dbReference>
<dbReference type="Gene3D" id="4.10.860.10">
    <property type="entry name" value="UVR domain"/>
    <property type="match status" value="1"/>
</dbReference>
<dbReference type="Gene3D" id="3.30.420.340">
    <property type="entry name" value="UvrC, RNAse H endonuclease domain"/>
    <property type="match status" value="1"/>
</dbReference>
<dbReference type="HAMAP" id="MF_00203">
    <property type="entry name" value="UvrC"/>
    <property type="match status" value="1"/>
</dbReference>
<dbReference type="InterPro" id="IPR000305">
    <property type="entry name" value="GIY-YIG_endonuc"/>
</dbReference>
<dbReference type="InterPro" id="IPR035901">
    <property type="entry name" value="GIY-YIG_endonuc_sf"/>
</dbReference>
<dbReference type="InterPro" id="IPR047296">
    <property type="entry name" value="GIY-YIG_UvrC_Cho"/>
</dbReference>
<dbReference type="InterPro" id="IPR010994">
    <property type="entry name" value="RuvA_2-like"/>
</dbReference>
<dbReference type="InterPro" id="IPR001943">
    <property type="entry name" value="UVR_dom"/>
</dbReference>
<dbReference type="InterPro" id="IPR036876">
    <property type="entry name" value="UVR_dom_sf"/>
</dbReference>
<dbReference type="InterPro" id="IPR050066">
    <property type="entry name" value="UvrABC_protein_C"/>
</dbReference>
<dbReference type="InterPro" id="IPR004791">
    <property type="entry name" value="UvrC"/>
</dbReference>
<dbReference type="InterPro" id="IPR001162">
    <property type="entry name" value="UvrC_RNase_H_dom"/>
</dbReference>
<dbReference type="InterPro" id="IPR038476">
    <property type="entry name" value="UvrC_RNase_H_dom_sf"/>
</dbReference>
<dbReference type="NCBIfam" id="TIGR00194">
    <property type="entry name" value="uvrC"/>
    <property type="match status" value="1"/>
</dbReference>
<dbReference type="PANTHER" id="PTHR30562:SF1">
    <property type="entry name" value="UVRABC SYSTEM PROTEIN C"/>
    <property type="match status" value="1"/>
</dbReference>
<dbReference type="PANTHER" id="PTHR30562">
    <property type="entry name" value="UVRC/OXIDOREDUCTASE"/>
    <property type="match status" value="1"/>
</dbReference>
<dbReference type="Pfam" id="PF01541">
    <property type="entry name" value="GIY-YIG"/>
    <property type="match status" value="1"/>
</dbReference>
<dbReference type="Pfam" id="PF14520">
    <property type="entry name" value="HHH_5"/>
    <property type="match status" value="1"/>
</dbReference>
<dbReference type="Pfam" id="PF02151">
    <property type="entry name" value="UVR"/>
    <property type="match status" value="1"/>
</dbReference>
<dbReference type="Pfam" id="PF22920">
    <property type="entry name" value="UvrC_RNaseH"/>
    <property type="match status" value="1"/>
</dbReference>
<dbReference type="Pfam" id="PF08459">
    <property type="entry name" value="UvrC_RNaseH_dom"/>
    <property type="match status" value="1"/>
</dbReference>
<dbReference type="SMART" id="SM00465">
    <property type="entry name" value="GIYc"/>
    <property type="match status" value="1"/>
</dbReference>
<dbReference type="SUPFAM" id="SSF46600">
    <property type="entry name" value="C-terminal UvrC-binding domain of UvrB"/>
    <property type="match status" value="1"/>
</dbReference>
<dbReference type="SUPFAM" id="SSF82771">
    <property type="entry name" value="GIY-YIG endonuclease"/>
    <property type="match status" value="1"/>
</dbReference>
<dbReference type="SUPFAM" id="SSF47781">
    <property type="entry name" value="RuvA domain 2-like"/>
    <property type="match status" value="1"/>
</dbReference>
<dbReference type="PROSITE" id="PS50164">
    <property type="entry name" value="GIY_YIG"/>
    <property type="match status" value="1"/>
</dbReference>
<dbReference type="PROSITE" id="PS50151">
    <property type="entry name" value="UVR"/>
    <property type="match status" value="1"/>
</dbReference>
<dbReference type="PROSITE" id="PS50165">
    <property type="entry name" value="UVRC"/>
    <property type="match status" value="1"/>
</dbReference>
<feature type="chain" id="PRO_1000099484" description="UvrABC system protein C">
    <location>
        <begin position="1"/>
        <end position="612"/>
    </location>
</feature>
<feature type="domain" description="GIY-YIG" evidence="1">
    <location>
        <begin position="20"/>
        <end position="98"/>
    </location>
</feature>
<feature type="domain" description="UVR" evidence="1">
    <location>
        <begin position="208"/>
        <end position="243"/>
    </location>
</feature>